<reference key="1">
    <citation type="submission" date="2006-10" db="EMBL/GenBank/DDBJ databases">
        <title>Complete sequence of Syntrophobacter fumaroxidans MPOB.</title>
        <authorList>
            <consortium name="US DOE Joint Genome Institute"/>
            <person name="Copeland A."/>
            <person name="Lucas S."/>
            <person name="Lapidus A."/>
            <person name="Barry K."/>
            <person name="Detter J.C."/>
            <person name="Glavina del Rio T."/>
            <person name="Hammon N."/>
            <person name="Israni S."/>
            <person name="Pitluck S."/>
            <person name="Goltsman E.G."/>
            <person name="Martinez M."/>
            <person name="Schmutz J."/>
            <person name="Larimer F."/>
            <person name="Land M."/>
            <person name="Hauser L."/>
            <person name="Kyrpides N."/>
            <person name="Kim E."/>
            <person name="Boone D.R."/>
            <person name="Brockman F."/>
            <person name="Culley D."/>
            <person name="Ferry J."/>
            <person name="Gunsalus R."/>
            <person name="McInerney M.J."/>
            <person name="Morrison M."/>
            <person name="Plugge C."/>
            <person name="Rohlin L."/>
            <person name="Scholten J."/>
            <person name="Sieber J."/>
            <person name="Stams A.J.M."/>
            <person name="Worm P."/>
            <person name="Henstra A.M."/>
            <person name="Richardson P."/>
        </authorList>
    </citation>
    <scope>NUCLEOTIDE SEQUENCE [LARGE SCALE GENOMIC DNA]</scope>
    <source>
        <strain>DSM 10017 / MPOB</strain>
    </source>
</reference>
<protein>
    <recommendedName>
        <fullName evidence="1">UPF0391 membrane protein Sfum_0248</fullName>
    </recommendedName>
</protein>
<proteinExistence type="inferred from homology"/>
<feature type="chain" id="PRO_5000166027" description="UPF0391 membrane protein Sfum_0248">
    <location>
        <begin position="1"/>
        <end position="55"/>
    </location>
</feature>
<feature type="transmembrane region" description="Helical" evidence="1">
    <location>
        <begin position="4"/>
        <end position="24"/>
    </location>
</feature>
<feature type="transmembrane region" description="Helical" evidence="1">
    <location>
        <begin position="28"/>
        <end position="48"/>
    </location>
</feature>
<comment type="subcellular location">
    <subcellularLocation>
        <location evidence="1">Cell membrane</location>
        <topology evidence="1">Multi-pass membrane protein</topology>
    </subcellularLocation>
</comment>
<comment type="similarity">
    <text evidence="1">Belongs to the UPF0391 family.</text>
</comment>
<comment type="sequence caution" evidence="2">
    <conflict type="erroneous initiation">
        <sequence resource="EMBL-CDS" id="ABK15949"/>
    </conflict>
</comment>
<evidence type="ECO:0000255" key="1">
    <source>
        <dbReference type="HAMAP-Rule" id="MF_01361"/>
    </source>
</evidence>
<evidence type="ECO:0000305" key="2"/>
<sequence>MIAWALIFLAVAIAAGVLGFGGIIGAQAWIAQVLFILFLVFFLVSLLSGRKPPVT</sequence>
<keyword id="KW-1003">Cell membrane</keyword>
<keyword id="KW-0472">Membrane</keyword>
<keyword id="KW-1185">Reference proteome</keyword>
<keyword id="KW-0812">Transmembrane</keyword>
<keyword id="KW-1133">Transmembrane helix</keyword>
<name>Y248_SYNFM</name>
<accession>A0LEU7</accession>
<organism>
    <name type="scientific">Syntrophobacter fumaroxidans (strain DSM 10017 / MPOB)</name>
    <dbReference type="NCBI Taxonomy" id="335543"/>
    <lineage>
        <taxon>Bacteria</taxon>
        <taxon>Pseudomonadati</taxon>
        <taxon>Thermodesulfobacteriota</taxon>
        <taxon>Syntrophobacteria</taxon>
        <taxon>Syntrophobacterales</taxon>
        <taxon>Syntrophobacteraceae</taxon>
        <taxon>Syntrophobacter</taxon>
    </lineage>
</organism>
<dbReference type="EMBL" id="CP000478">
    <property type="protein sequence ID" value="ABK15949.1"/>
    <property type="status" value="ALT_INIT"/>
    <property type="molecule type" value="Genomic_DNA"/>
</dbReference>
<dbReference type="RefSeq" id="WP_041439546.1">
    <property type="nucleotide sequence ID" value="NC_008554.1"/>
</dbReference>
<dbReference type="FunCoup" id="A0LEU7">
    <property type="interactions" value="2"/>
</dbReference>
<dbReference type="STRING" id="335543.Sfum_0248"/>
<dbReference type="KEGG" id="sfu:Sfum_0248"/>
<dbReference type="eggNOG" id="COG5487">
    <property type="taxonomic scope" value="Bacteria"/>
</dbReference>
<dbReference type="HOGENOM" id="CLU_187346_2_1_7"/>
<dbReference type="InParanoid" id="A0LEU7"/>
<dbReference type="OrthoDB" id="5461362at2"/>
<dbReference type="Proteomes" id="UP000001784">
    <property type="component" value="Chromosome"/>
</dbReference>
<dbReference type="GO" id="GO:0005886">
    <property type="term" value="C:plasma membrane"/>
    <property type="evidence" value="ECO:0007669"/>
    <property type="project" value="UniProtKB-SubCell"/>
</dbReference>
<dbReference type="HAMAP" id="MF_01361">
    <property type="entry name" value="UPF0391"/>
    <property type="match status" value="1"/>
</dbReference>
<dbReference type="InterPro" id="IPR009760">
    <property type="entry name" value="DUF1328"/>
</dbReference>
<dbReference type="NCBIfam" id="NF010229">
    <property type="entry name" value="PRK13682.1-4"/>
    <property type="match status" value="1"/>
</dbReference>
<dbReference type="Pfam" id="PF07043">
    <property type="entry name" value="DUF1328"/>
    <property type="match status" value="1"/>
</dbReference>
<dbReference type="PIRSF" id="PIRSF036466">
    <property type="entry name" value="UCP036466"/>
    <property type="match status" value="1"/>
</dbReference>
<gene>
    <name type="ordered locus">Sfum_0248</name>
</gene>